<keyword id="KW-0963">Cytoplasm</keyword>
<keyword id="KW-0274">FAD</keyword>
<keyword id="KW-0285">Flavoprotein</keyword>
<keyword id="KW-0489">Methyltransferase</keyword>
<keyword id="KW-0520">NAD</keyword>
<keyword id="KW-0521">NADP</keyword>
<keyword id="KW-0808">Transferase</keyword>
<keyword id="KW-0819">tRNA processing</keyword>
<comment type="function">
    <text evidence="1">Catalyzes the folate-dependent formation of 5-methyl-uridine at position 54 (M-5-U54) in all tRNAs.</text>
</comment>
<comment type="catalytic activity">
    <reaction evidence="1">
        <text>uridine(54) in tRNA + (6R)-5,10-methylene-5,6,7,8-tetrahydrofolate + NADH + H(+) = 5-methyluridine(54) in tRNA + (6S)-5,6,7,8-tetrahydrofolate + NAD(+)</text>
        <dbReference type="Rhea" id="RHEA:16873"/>
        <dbReference type="Rhea" id="RHEA-COMP:10167"/>
        <dbReference type="Rhea" id="RHEA-COMP:10193"/>
        <dbReference type="ChEBI" id="CHEBI:15378"/>
        <dbReference type="ChEBI" id="CHEBI:15636"/>
        <dbReference type="ChEBI" id="CHEBI:57453"/>
        <dbReference type="ChEBI" id="CHEBI:57540"/>
        <dbReference type="ChEBI" id="CHEBI:57945"/>
        <dbReference type="ChEBI" id="CHEBI:65315"/>
        <dbReference type="ChEBI" id="CHEBI:74447"/>
        <dbReference type="EC" id="2.1.1.74"/>
    </reaction>
</comment>
<comment type="catalytic activity">
    <reaction evidence="1">
        <text>uridine(54) in tRNA + (6R)-5,10-methylene-5,6,7,8-tetrahydrofolate + NADPH + H(+) = 5-methyluridine(54) in tRNA + (6S)-5,6,7,8-tetrahydrofolate + NADP(+)</text>
        <dbReference type="Rhea" id="RHEA:62372"/>
        <dbReference type="Rhea" id="RHEA-COMP:10167"/>
        <dbReference type="Rhea" id="RHEA-COMP:10193"/>
        <dbReference type="ChEBI" id="CHEBI:15378"/>
        <dbReference type="ChEBI" id="CHEBI:15636"/>
        <dbReference type="ChEBI" id="CHEBI:57453"/>
        <dbReference type="ChEBI" id="CHEBI:57783"/>
        <dbReference type="ChEBI" id="CHEBI:58349"/>
        <dbReference type="ChEBI" id="CHEBI:65315"/>
        <dbReference type="ChEBI" id="CHEBI:74447"/>
        <dbReference type="EC" id="2.1.1.74"/>
    </reaction>
</comment>
<comment type="cofactor">
    <cofactor evidence="1">
        <name>FAD</name>
        <dbReference type="ChEBI" id="CHEBI:57692"/>
    </cofactor>
</comment>
<comment type="subcellular location">
    <subcellularLocation>
        <location evidence="1">Cytoplasm</location>
    </subcellularLocation>
</comment>
<comment type="similarity">
    <text evidence="1">Belongs to the MnmG family. TrmFO subfamily.</text>
</comment>
<accession>A2BXA3</accession>
<reference key="1">
    <citation type="journal article" date="2007" name="PLoS Genet.">
        <title>Patterns and implications of gene gain and loss in the evolution of Prochlorococcus.</title>
        <authorList>
            <person name="Kettler G.C."/>
            <person name="Martiny A.C."/>
            <person name="Huang K."/>
            <person name="Zucker J."/>
            <person name="Coleman M.L."/>
            <person name="Rodrigue S."/>
            <person name="Chen F."/>
            <person name="Lapidus A."/>
            <person name="Ferriera S."/>
            <person name="Johnson J."/>
            <person name="Steglich C."/>
            <person name="Church G.M."/>
            <person name="Richardson P."/>
            <person name="Chisholm S.W."/>
        </authorList>
    </citation>
    <scope>NUCLEOTIDE SEQUENCE [LARGE SCALE GENOMIC DNA]</scope>
    <source>
        <strain>MIT 9515</strain>
    </source>
</reference>
<feature type="chain" id="PRO_0000346381" description="Methylenetetrahydrofolate--tRNA-(uracil-5-)-methyltransferase TrmFO">
    <location>
        <begin position="1"/>
        <end position="467"/>
    </location>
</feature>
<feature type="binding site" evidence="1">
    <location>
        <begin position="10"/>
        <end position="15"/>
    </location>
    <ligand>
        <name>FAD</name>
        <dbReference type="ChEBI" id="CHEBI:57692"/>
    </ligand>
</feature>
<sequence length="467" mass="52360">MLNKEVIVIGAGLAGCEAAWQIANSGVEVKLVEMRPIHSTPAHHTSEFGELVCSNSFGALSTDRAAGLLQEELRTFNSLIINTADEFSVPAGGALAVDRSKFSKSLTQTLSNHPLVEIKRFEQLDLPDKNRITVIATGPLTSNELANKLKNFTGLDSCHFFDAASPIIYGETINYDIAFRASRYDKGDPAYLNCPMNKIDYLNFRNALIEAEQATLKDFEKESANFFEACLPIEEMARRGVDTMRYGPLKSIGLWNPKWGDLFDRENRLKKRPHAIVQLRKEDLKGKLLNMVGFQTNLKWSEQKRIFRMIPGLEKAEFVRFGVMHRNTFLESPKLLLPTLQFLKRENLFAAGQITGTEGYAAAASGGLLAGLNASLLANNKSPVTFPDESMIGALMNFISNKNEIMSQQKKNKFQPMPASFGLVPELNNKIKDKKLRYKAYQKRSLEVLKEFKKVLDSSFEKDHILV</sequence>
<gene>
    <name evidence="1" type="primary">trmFO</name>
    <name type="ordered locus">P9515_12071</name>
</gene>
<protein>
    <recommendedName>
        <fullName evidence="1">Methylenetetrahydrofolate--tRNA-(uracil-5-)-methyltransferase TrmFO</fullName>
        <ecNumber evidence="1">2.1.1.74</ecNumber>
    </recommendedName>
    <alternativeName>
        <fullName evidence="1">Folate-dependent tRNA (uracil-5-)-methyltransferase</fullName>
    </alternativeName>
    <alternativeName>
        <fullName evidence="1">Folate-dependent tRNA(M-5-U54)-methyltransferase</fullName>
    </alternativeName>
</protein>
<organism>
    <name type="scientific">Prochlorococcus marinus (strain MIT 9515)</name>
    <dbReference type="NCBI Taxonomy" id="167542"/>
    <lineage>
        <taxon>Bacteria</taxon>
        <taxon>Bacillati</taxon>
        <taxon>Cyanobacteriota</taxon>
        <taxon>Cyanophyceae</taxon>
        <taxon>Synechococcales</taxon>
        <taxon>Prochlorococcaceae</taxon>
        <taxon>Prochlorococcus</taxon>
    </lineage>
</organism>
<evidence type="ECO:0000255" key="1">
    <source>
        <dbReference type="HAMAP-Rule" id="MF_01037"/>
    </source>
</evidence>
<dbReference type="EC" id="2.1.1.74" evidence="1"/>
<dbReference type="EMBL" id="CP000552">
    <property type="protein sequence ID" value="ABM72414.1"/>
    <property type="molecule type" value="Genomic_DNA"/>
</dbReference>
<dbReference type="RefSeq" id="WP_011820514.1">
    <property type="nucleotide sequence ID" value="NC_008817.1"/>
</dbReference>
<dbReference type="SMR" id="A2BXA3"/>
<dbReference type="STRING" id="167542.P9515_12071"/>
<dbReference type="GeneID" id="60201472"/>
<dbReference type="KEGG" id="pmc:P9515_12071"/>
<dbReference type="eggNOG" id="COG1206">
    <property type="taxonomic scope" value="Bacteria"/>
</dbReference>
<dbReference type="HOGENOM" id="CLU_033057_1_0_3"/>
<dbReference type="OrthoDB" id="9803114at2"/>
<dbReference type="Proteomes" id="UP000001589">
    <property type="component" value="Chromosome"/>
</dbReference>
<dbReference type="GO" id="GO:0005829">
    <property type="term" value="C:cytosol"/>
    <property type="evidence" value="ECO:0007669"/>
    <property type="project" value="TreeGrafter"/>
</dbReference>
<dbReference type="GO" id="GO:0050660">
    <property type="term" value="F:flavin adenine dinucleotide binding"/>
    <property type="evidence" value="ECO:0007669"/>
    <property type="project" value="UniProtKB-UniRule"/>
</dbReference>
<dbReference type="GO" id="GO:0047151">
    <property type="term" value="F:tRNA (uracil(54)-C5)-methyltransferase activity, 5,10-methylenetetrahydrofolate-dependent"/>
    <property type="evidence" value="ECO:0007669"/>
    <property type="project" value="UniProtKB-UniRule"/>
</dbReference>
<dbReference type="GO" id="GO:0030488">
    <property type="term" value="P:tRNA methylation"/>
    <property type="evidence" value="ECO:0007669"/>
    <property type="project" value="TreeGrafter"/>
</dbReference>
<dbReference type="GO" id="GO:0002098">
    <property type="term" value="P:tRNA wobble uridine modification"/>
    <property type="evidence" value="ECO:0007669"/>
    <property type="project" value="TreeGrafter"/>
</dbReference>
<dbReference type="Gene3D" id="3.50.50.60">
    <property type="entry name" value="FAD/NAD(P)-binding domain"/>
    <property type="match status" value="2"/>
</dbReference>
<dbReference type="HAMAP" id="MF_01037">
    <property type="entry name" value="TrmFO"/>
    <property type="match status" value="1"/>
</dbReference>
<dbReference type="InterPro" id="IPR036188">
    <property type="entry name" value="FAD/NAD-bd_sf"/>
</dbReference>
<dbReference type="InterPro" id="IPR002218">
    <property type="entry name" value="MnmG-rel"/>
</dbReference>
<dbReference type="InterPro" id="IPR020595">
    <property type="entry name" value="MnmG-rel_CS"/>
</dbReference>
<dbReference type="InterPro" id="IPR040131">
    <property type="entry name" value="MnmG_N"/>
</dbReference>
<dbReference type="InterPro" id="IPR004417">
    <property type="entry name" value="TrmFO"/>
</dbReference>
<dbReference type="NCBIfam" id="TIGR00137">
    <property type="entry name" value="gid_trmFO"/>
    <property type="match status" value="1"/>
</dbReference>
<dbReference type="NCBIfam" id="NF003739">
    <property type="entry name" value="PRK05335.1"/>
    <property type="match status" value="1"/>
</dbReference>
<dbReference type="PANTHER" id="PTHR11806">
    <property type="entry name" value="GLUCOSE INHIBITED DIVISION PROTEIN A"/>
    <property type="match status" value="1"/>
</dbReference>
<dbReference type="PANTHER" id="PTHR11806:SF2">
    <property type="entry name" value="METHYLENETETRAHYDROFOLATE--TRNA-(URACIL-5-)-METHYLTRANSFERASE TRMFO"/>
    <property type="match status" value="1"/>
</dbReference>
<dbReference type="Pfam" id="PF01134">
    <property type="entry name" value="GIDA"/>
    <property type="match status" value="1"/>
</dbReference>
<dbReference type="SUPFAM" id="SSF51905">
    <property type="entry name" value="FAD/NAD(P)-binding domain"/>
    <property type="match status" value="1"/>
</dbReference>
<dbReference type="PROSITE" id="PS01281">
    <property type="entry name" value="GIDA_2"/>
    <property type="match status" value="1"/>
</dbReference>
<proteinExistence type="inferred from homology"/>
<name>TRMFO_PROM5</name>